<feature type="chain" id="PRO_0000096904" description="Zinc finger CCHC domain-containing protein 17">
    <location>
        <begin position="1"/>
        <end position="241"/>
    </location>
</feature>
<feature type="domain" description="S1 motif" evidence="4">
    <location>
        <begin position="16"/>
        <end position="88"/>
    </location>
</feature>
<feature type="zinc finger region" description="CCHC-type" evidence="3">
    <location>
        <begin position="131"/>
        <end position="148"/>
    </location>
</feature>
<feature type="region of interest" description="Disordered" evidence="5">
    <location>
        <begin position="160"/>
        <end position="241"/>
    </location>
</feature>
<feature type="compositionally biased region" description="Basic and acidic residues" evidence="5">
    <location>
        <begin position="166"/>
        <end position="178"/>
    </location>
</feature>
<feature type="compositionally biased region" description="Basic residues" evidence="5">
    <location>
        <begin position="182"/>
        <end position="198"/>
    </location>
</feature>
<feature type="compositionally biased region" description="Basic and acidic residues" evidence="5">
    <location>
        <begin position="211"/>
        <end position="225"/>
    </location>
</feature>
<feature type="compositionally biased region" description="Basic residues" evidence="5">
    <location>
        <begin position="226"/>
        <end position="241"/>
    </location>
</feature>
<feature type="modified residue" description="Phosphoserine" evidence="2">
    <location>
        <position position="114"/>
    </location>
</feature>
<feature type="modified residue" description="N6-acetyllysine" evidence="11">
    <location>
        <position position="144"/>
    </location>
</feature>
<feature type="modified residue" description="Phosphoserine" evidence="2">
    <location>
        <position position="183"/>
    </location>
</feature>
<feature type="splice variant" id="VSP_015309" description="In isoform 2." evidence="8">
    <location>
        <begin position="1"/>
        <end position="48"/>
    </location>
</feature>
<protein>
    <recommendedName>
        <fullName>Zinc finger CCHC domain-containing protein 17</fullName>
    </recommendedName>
    <alternativeName>
        <fullName evidence="9">Nucleolar protein of 40 kDa</fullName>
        <shortName evidence="9">pNO40</shortName>
    </alternativeName>
    <alternativeName>
        <fullName>Putative S1 RNA-binding domain protein</fullName>
        <shortName>PS1D protein</shortName>
    </alternativeName>
</protein>
<organism>
    <name type="scientific">Mus musculus</name>
    <name type="common">Mouse</name>
    <dbReference type="NCBI Taxonomy" id="10090"/>
    <lineage>
        <taxon>Eukaryota</taxon>
        <taxon>Metazoa</taxon>
        <taxon>Chordata</taxon>
        <taxon>Craniata</taxon>
        <taxon>Vertebrata</taxon>
        <taxon>Euteleostomi</taxon>
        <taxon>Mammalia</taxon>
        <taxon>Eutheria</taxon>
        <taxon>Euarchontoglires</taxon>
        <taxon>Glires</taxon>
        <taxon>Rodentia</taxon>
        <taxon>Myomorpha</taxon>
        <taxon>Muroidea</taxon>
        <taxon>Muridae</taxon>
        <taxon>Murinae</taxon>
        <taxon>Mus</taxon>
        <taxon>Mus</taxon>
    </lineage>
</organism>
<keyword id="KW-0007">Acetylation</keyword>
<keyword id="KW-0025">Alternative splicing</keyword>
<keyword id="KW-0479">Metal-binding</keyword>
<keyword id="KW-0539">Nucleus</keyword>
<keyword id="KW-0597">Phosphoprotein</keyword>
<keyword id="KW-1185">Reference proteome</keyword>
<keyword id="KW-0687">Ribonucleoprotein</keyword>
<keyword id="KW-0862">Zinc</keyword>
<keyword id="KW-0863">Zinc-finger</keyword>
<reference key="1">
    <citation type="journal article" date="2002" name="J. Biol. Chem.">
        <title>Identification of ribosomal proteins specific to higher eukaryotic organisms.</title>
        <authorList>
            <person name="Gueydan C."/>
            <person name="Wauquier C."/>
            <person name="De Mees C."/>
            <person name="Huez G."/>
            <person name="Kruys V."/>
        </authorList>
    </citation>
    <scope>NUCLEOTIDE SEQUENCE [MRNA] (ISOFORMS 1 AND 2)</scope>
    <scope>ALTERNATIVE SPLICING</scope>
    <scope>IDENTIFICATION IN THE 60 S RIBOSOMAL SUBUNIT</scope>
    <scope>SUBCELLULAR LOCATION</scope>
    <scope>TISSUE SPECIFICITY</scope>
</reference>
<reference key="2">
    <citation type="journal article" date="2004" name="Genome Res.">
        <title>The status, quality, and expansion of the NIH full-length cDNA project: the Mammalian Gene Collection (MGC).</title>
        <authorList>
            <consortium name="The MGC Project Team"/>
        </authorList>
    </citation>
    <scope>NUCLEOTIDE SEQUENCE [LARGE SCALE MRNA] (ISOFORM 1)</scope>
    <source>
        <strain>FVB/N</strain>
        <tissue>Colon</tissue>
        <tissue>Liver</tissue>
    </source>
</reference>
<reference key="3">
    <citation type="journal article" date="2003" name="Biochem. Biophys. Res. Commun.">
        <title>Molecular characterization of a novel nucleolar protein, pNO40.</title>
        <authorList>
            <person name="Chang W.-L."/>
            <person name="Lee D.-C."/>
            <person name="Leu S."/>
            <person name="Huang Y.-M."/>
            <person name="Lu M.-C."/>
            <person name="Ouyang P."/>
        </authorList>
    </citation>
    <scope>SUBCELLULAR LOCATION</scope>
    <scope>TISSUE SPECIFICITY</scope>
    <source>
        <tissue>Kidney</tissue>
    </source>
</reference>
<reference key="4">
    <citation type="journal article" date="2013" name="Mol. Cell">
        <title>SIRT5-mediated lysine desuccinylation impacts diverse metabolic pathways.</title>
        <authorList>
            <person name="Park J."/>
            <person name="Chen Y."/>
            <person name="Tishkoff D.X."/>
            <person name="Peng C."/>
            <person name="Tan M."/>
            <person name="Dai L."/>
            <person name="Xie Z."/>
            <person name="Zhang Y."/>
            <person name="Zwaans B.M."/>
            <person name="Skinner M.E."/>
            <person name="Lombard D.B."/>
            <person name="Zhao Y."/>
        </authorList>
    </citation>
    <scope>ACETYLATION [LARGE SCALE ANALYSIS] AT LYS-144</scope>
    <scope>IDENTIFICATION BY MASS SPECTROMETRY [LARGE SCALE ANALYSIS]</scope>
    <source>
        <tissue>Embryonic fibroblast</tissue>
    </source>
</reference>
<name>ZCC17_MOUSE</name>
<sequence length="241" mass="27472">MNSGRPETMENLPALYTIFQGEVAMVTDYGAFIKIPGCRKQGLVHRTHMSSCRVDKPSEIVDVGDKVWVKLIGREMKNDRIKVSLSMKVVNQGTGKDLDPNNVVIEQEERRRRSFQDYTGQKITLEAVLNTTCKKCGCKGHFAKDCFMQPGGTKYSLIPEEEEEKEEAKAEGLEKPDPTKNSSRKRKKEKKKKKHRDRKSSDCDSSDSESDTGKKARHSSKDSKATKKKKKKKKHKKKHKE</sequence>
<gene>
    <name type="primary">Zcchc17</name>
    <name type="synonym">Ps1d</name>
    <name type="ORF">Ldc4</name>
</gene>
<comment type="subunit">
    <text evidence="1 6">Interacts with PNN (By similarity). Associates with the 60S ribosomal subunit.</text>
</comment>
<comment type="subcellular location">
    <subcellularLocation>
        <location evidence="6 7">Nucleus</location>
        <location evidence="6 7">Nucleolus</location>
    </subcellularLocation>
</comment>
<comment type="alternative products">
    <event type="alternative splicing"/>
    <isoform>
        <id>Q9ESX4-1</id>
        <name>1</name>
        <sequence type="displayed"/>
    </isoform>
    <isoform>
        <id>Q9ESX4-2</id>
        <name>2</name>
        <sequence type="described" ref="VSP_015309"/>
    </isoform>
</comment>
<comment type="tissue specificity">
    <text evidence="6 7">Expressed in liver, brain, heart, kidney testis, stomach, small intestine, skin, thymus, uterus, placenta, spleen, lung and skeletal muscle.</text>
</comment>
<comment type="miscellaneous">
    <molecule>Isoform 2</molecule>
    <text evidence="10">Less abundant than isoform 1.</text>
</comment>
<dbReference type="EMBL" id="AJ272345">
    <property type="protein sequence ID" value="CAC03718.1"/>
    <property type="molecule type" value="mRNA"/>
</dbReference>
<dbReference type="EMBL" id="AY253297">
    <property type="protein sequence ID" value="AAO83392.1"/>
    <property type="molecule type" value="mRNA"/>
</dbReference>
<dbReference type="EMBL" id="BC018382">
    <property type="protein sequence ID" value="AAH18382.1"/>
    <property type="molecule type" value="mRNA"/>
</dbReference>
<dbReference type="EMBL" id="BC049231">
    <property type="protein sequence ID" value="AAH49231.1"/>
    <property type="molecule type" value="mRNA"/>
</dbReference>
<dbReference type="CCDS" id="CCDS38891.1">
    <molecule id="Q9ESX4-1"/>
</dbReference>
<dbReference type="RefSeq" id="NP_001342327.1">
    <molecule id="Q9ESX4-2"/>
    <property type="nucleotide sequence ID" value="NM_001355398.1"/>
</dbReference>
<dbReference type="RefSeq" id="NP_001342328.1">
    <molecule id="Q9ESX4-2"/>
    <property type="nucleotide sequence ID" value="NM_001355399.1"/>
</dbReference>
<dbReference type="RefSeq" id="NP_694800.1">
    <molecule id="Q9ESX4-1"/>
    <property type="nucleotide sequence ID" value="NM_153160.5"/>
</dbReference>
<dbReference type="RefSeq" id="XP_006503322.1">
    <property type="nucleotide sequence ID" value="XM_006503259.1"/>
</dbReference>
<dbReference type="RefSeq" id="XP_006503323.1">
    <property type="nucleotide sequence ID" value="XM_006503260.1"/>
</dbReference>
<dbReference type="SMR" id="Q9ESX4"/>
<dbReference type="BioGRID" id="546920">
    <property type="interactions" value="6"/>
</dbReference>
<dbReference type="FunCoup" id="Q9ESX4">
    <property type="interactions" value="1350"/>
</dbReference>
<dbReference type="IntAct" id="Q9ESX4">
    <property type="interactions" value="1"/>
</dbReference>
<dbReference type="STRING" id="10090.ENSMUSP00000120807"/>
<dbReference type="iPTMnet" id="Q9ESX4"/>
<dbReference type="PhosphoSitePlus" id="Q9ESX4"/>
<dbReference type="PaxDb" id="10090-ENSMUSP00000120807"/>
<dbReference type="ProteomicsDB" id="252979">
    <molecule id="Q9ESX4-1"/>
</dbReference>
<dbReference type="ProteomicsDB" id="252980">
    <molecule id="Q9ESX4-2"/>
</dbReference>
<dbReference type="Pumba" id="Q9ESX4"/>
<dbReference type="Antibodypedia" id="31100">
    <property type="antibodies" value="190 antibodies from 23 providers"/>
</dbReference>
<dbReference type="Ensembl" id="ENSMUST00000134159.3">
    <molecule id="Q9ESX4-1"/>
    <property type="protein sequence ID" value="ENSMUSP00000120807.3"/>
    <property type="gene ID" value="ENSMUSG00000028772.20"/>
</dbReference>
<dbReference type="GeneID" id="619605"/>
<dbReference type="KEGG" id="mmu:619605"/>
<dbReference type="UCSC" id="uc008uze.1">
    <molecule id="Q9ESX4-1"/>
    <property type="organism name" value="mouse"/>
</dbReference>
<dbReference type="AGR" id="MGI:1919955"/>
<dbReference type="CTD" id="51538"/>
<dbReference type="MGI" id="MGI:1919955">
    <property type="gene designation" value="Zcchc17"/>
</dbReference>
<dbReference type="VEuPathDB" id="HostDB:ENSMUSG00000028772"/>
<dbReference type="eggNOG" id="KOG0922">
    <property type="taxonomic scope" value="Eukaryota"/>
</dbReference>
<dbReference type="GeneTree" id="ENSGT00510000047363"/>
<dbReference type="HOGENOM" id="CLU_068074_0_0_1"/>
<dbReference type="InParanoid" id="Q9ESX4"/>
<dbReference type="OMA" id="VWCKVIS"/>
<dbReference type="OrthoDB" id="1918363at2759"/>
<dbReference type="PhylomeDB" id="Q9ESX4"/>
<dbReference type="TreeFam" id="TF332136"/>
<dbReference type="BioGRID-ORCS" id="619605">
    <property type="hits" value="1 hit in 75 CRISPR screens"/>
</dbReference>
<dbReference type="ChiTaRS" id="Zcchc17">
    <property type="organism name" value="mouse"/>
</dbReference>
<dbReference type="PRO" id="PR:Q9ESX4"/>
<dbReference type="Proteomes" id="UP000000589">
    <property type="component" value="Chromosome 4"/>
</dbReference>
<dbReference type="RNAct" id="Q9ESX4">
    <property type="molecule type" value="protein"/>
</dbReference>
<dbReference type="Bgee" id="ENSMUSG00000028772">
    <property type="expression patterns" value="Expressed in undifferentiated genital tubercle and 73 other cell types or tissues"/>
</dbReference>
<dbReference type="ExpressionAtlas" id="Q9ESX4">
    <property type="expression patterns" value="baseline and differential"/>
</dbReference>
<dbReference type="GO" id="GO:0022625">
    <property type="term" value="C:cytosolic large ribosomal subunit"/>
    <property type="evidence" value="ECO:0000314"/>
    <property type="project" value="MGI"/>
</dbReference>
<dbReference type="GO" id="GO:0005730">
    <property type="term" value="C:nucleolus"/>
    <property type="evidence" value="ECO:0000314"/>
    <property type="project" value="MGI"/>
</dbReference>
<dbReference type="GO" id="GO:0042802">
    <property type="term" value="F:identical protein binding"/>
    <property type="evidence" value="ECO:0007669"/>
    <property type="project" value="Ensembl"/>
</dbReference>
<dbReference type="GO" id="GO:0003723">
    <property type="term" value="F:RNA binding"/>
    <property type="evidence" value="ECO:0000304"/>
    <property type="project" value="MGI"/>
</dbReference>
<dbReference type="GO" id="GO:0008270">
    <property type="term" value="F:zinc ion binding"/>
    <property type="evidence" value="ECO:0007669"/>
    <property type="project" value="UniProtKB-KW"/>
</dbReference>
<dbReference type="CDD" id="cd05686">
    <property type="entry name" value="S1_pNO40"/>
    <property type="match status" value="1"/>
</dbReference>
<dbReference type="FunFam" id="2.40.50.140:FF:000154">
    <property type="entry name" value="nucleolar protein of 40 kDa"/>
    <property type="match status" value="1"/>
</dbReference>
<dbReference type="Gene3D" id="2.40.50.140">
    <property type="entry name" value="Nucleic acid-binding proteins"/>
    <property type="match status" value="1"/>
</dbReference>
<dbReference type="InterPro" id="IPR012340">
    <property type="entry name" value="NA-bd_OB-fold"/>
</dbReference>
<dbReference type="InterPro" id="IPR003029">
    <property type="entry name" value="S1_domain"/>
</dbReference>
<dbReference type="InterPro" id="IPR047913">
    <property type="entry name" value="ZCCHC17_S1"/>
</dbReference>
<dbReference type="InterPro" id="IPR001878">
    <property type="entry name" value="Znf_CCHC"/>
</dbReference>
<dbReference type="PANTHER" id="PTHR15838">
    <property type="entry name" value="NUCLEOLAR PROTEIN OF 40 KDA"/>
    <property type="match status" value="1"/>
</dbReference>
<dbReference type="PANTHER" id="PTHR15838:SF1">
    <property type="entry name" value="ZINC FINGER CCHC DOMAIN-CONTAINING PROTEIN 17"/>
    <property type="match status" value="1"/>
</dbReference>
<dbReference type="Pfam" id="PF00575">
    <property type="entry name" value="S1"/>
    <property type="match status" value="1"/>
</dbReference>
<dbReference type="SMART" id="SM00316">
    <property type="entry name" value="S1"/>
    <property type="match status" value="1"/>
</dbReference>
<dbReference type="SUPFAM" id="SSF50249">
    <property type="entry name" value="Nucleic acid-binding proteins"/>
    <property type="match status" value="1"/>
</dbReference>
<dbReference type="PROSITE" id="PS50126">
    <property type="entry name" value="S1"/>
    <property type="match status" value="1"/>
</dbReference>
<dbReference type="PROSITE" id="PS50158">
    <property type="entry name" value="ZF_CCHC"/>
    <property type="match status" value="1"/>
</dbReference>
<evidence type="ECO:0000250" key="1"/>
<evidence type="ECO:0000250" key="2">
    <source>
        <dbReference type="UniProtKB" id="Q9NP64"/>
    </source>
</evidence>
<evidence type="ECO:0000255" key="3">
    <source>
        <dbReference type="PROSITE-ProRule" id="PRU00047"/>
    </source>
</evidence>
<evidence type="ECO:0000255" key="4">
    <source>
        <dbReference type="PROSITE-ProRule" id="PRU00180"/>
    </source>
</evidence>
<evidence type="ECO:0000256" key="5">
    <source>
        <dbReference type="SAM" id="MobiDB-lite"/>
    </source>
</evidence>
<evidence type="ECO:0000269" key="6">
    <source>
    </source>
</evidence>
<evidence type="ECO:0000269" key="7">
    <source>
    </source>
</evidence>
<evidence type="ECO:0000303" key="8">
    <source>
    </source>
</evidence>
<evidence type="ECO:0000303" key="9">
    <source>
    </source>
</evidence>
<evidence type="ECO:0000305" key="10"/>
<evidence type="ECO:0007744" key="11">
    <source>
    </source>
</evidence>
<accession>Q9ESX4</accession>
<proteinExistence type="evidence at protein level"/>